<organism>
    <name type="scientific">Ricinus communis</name>
    <name type="common">Castor bean</name>
    <dbReference type="NCBI Taxonomy" id="3988"/>
    <lineage>
        <taxon>Eukaryota</taxon>
        <taxon>Viridiplantae</taxon>
        <taxon>Streptophyta</taxon>
        <taxon>Embryophyta</taxon>
        <taxon>Tracheophyta</taxon>
        <taxon>Spermatophyta</taxon>
        <taxon>Magnoliopsida</taxon>
        <taxon>eudicotyledons</taxon>
        <taxon>Gunneridae</taxon>
        <taxon>Pentapetalae</taxon>
        <taxon>rosids</taxon>
        <taxon>fabids</taxon>
        <taxon>Malpighiales</taxon>
        <taxon>Euphorbiaceae</taxon>
        <taxon>Acalyphoideae</taxon>
        <taxon>Acalypheae</taxon>
        <taxon>Ricinus</taxon>
    </lineage>
</organism>
<evidence type="ECO:0000250" key="1"/>
<evidence type="ECO:0000255" key="2"/>
<evidence type="ECO:0000305" key="3"/>
<reference key="1">
    <citation type="journal article" date="1990" name="Plant Mol. Biol.">
        <title>Nucleotide sequence analysis of a cDNA clone encoding malate synthase of castor bean (Ricinus communis) reveals homology to DAL7, a gene involved in allantoin degradation in Saccharomyces cerevisiae.</title>
        <authorList>
            <person name="Rodriguez D."/>
            <person name="Ginger R.S."/>
            <person name="Baker A."/>
            <person name="Northcote D.H."/>
        </authorList>
    </citation>
    <scope>NUCLEOTIDE SEQUENCE [MRNA]</scope>
    <source>
        <tissue>Endosperm</tissue>
    </source>
</reference>
<comment type="catalytic activity">
    <reaction>
        <text>glyoxylate + acetyl-CoA + H2O = (S)-malate + CoA + H(+)</text>
        <dbReference type="Rhea" id="RHEA:18181"/>
        <dbReference type="ChEBI" id="CHEBI:15377"/>
        <dbReference type="ChEBI" id="CHEBI:15378"/>
        <dbReference type="ChEBI" id="CHEBI:15589"/>
        <dbReference type="ChEBI" id="CHEBI:36655"/>
        <dbReference type="ChEBI" id="CHEBI:57287"/>
        <dbReference type="ChEBI" id="CHEBI:57288"/>
        <dbReference type="EC" id="2.3.3.9"/>
    </reaction>
</comment>
<comment type="pathway">
    <text>Carbohydrate metabolism; glyoxylate cycle; (S)-malate from isocitrate: step 2/2.</text>
</comment>
<comment type="subcellular location">
    <subcellularLocation>
        <location>Glyoxysome</location>
    </subcellularLocation>
</comment>
<comment type="similarity">
    <text evidence="3">Belongs to the malate synthase family.</text>
</comment>
<keyword id="KW-0329">Glyoxylate bypass</keyword>
<keyword id="KW-0330">Glyoxysome</keyword>
<keyword id="KW-0576">Peroxisome</keyword>
<keyword id="KW-0808">Transferase</keyword>
<keyword id="KW-0816">Tricarboxylic acid cycle</keyword>
<feature type="chain" id="PRO_0000166872" description="Malate synthase, glyoxysomal">
    <location>
        <begin position="1"/>
        <end position="567"/>
    </location>
</feature>
<feature type="short sequence motif" description="Microbody targeting signal" evidence="2">
    <location>
        <begin position="565"/>
        <end position="567"/>
    </location>
</feature>
<feature type="active site" description="Proton acceptor" evidence="1">
    <location>
        <position position="182"/>
    </location>
</feature>
<feature type="active site" description="Proton donor" evidence="1">
    <location>
        <position position="468"/>
    </location>
</feature>
<protein>
    <recommendedName>
        <fullName>Malate synthase, glyoxysomal</fullName>
        <ecNumber>2.3.3.9</ecNumber>
    </recommendedName>
</protein>
<name>MASY_RICCO</name>
<dbReference type="EC" id="2.3.3.9"/>
<dbReference type="EMBL" id="X52806">
    <property type="protein sequence ID" value="CAA36994.1"/>
    <property type="molecule type" value="mRNA"/>
</dbReference>
<dbReference type="PIR" id="S14677">
    <property type="entry name" value="SYCSM2"/>
</dbReference>
<dbReference type="RefSeq" id="NP_001310646.1">
    <property type="nucleotide sequence ID" value="NM_001323717.1"/>
</dbReference>
<dbReference type="SMR" id="P17815"/>
<dbReference type="GeneID" id="8266340"/>
<dbReference type="KEGG" id="rcu:8266340"/>
<dbReference type="eggNOG" id="KOG1261">
    <property type="taxonomic scope" value="Eukaryota"/>
</dbReference>
<dbReference type="OMA" id="WHLPERH"/>
<dbReference type="OrthoDB" id="4078635at2759"/>
<dbReference type="BRENDA" id="2.3.3.9">
    <property type="organism ID" value="1204"/>
</dbReference>
<dbReference type="UniPathway" id="UPA00703">
    <property type="reaction ID" value="UER00720"/>
</dbReference>
<dbReference type="GO" id="GO:0009514">
    <property type="term" value="C:glyoxysome"/>
    <property type="evidence" value="ECO:0007669"/>
    <property type="project" value="UniProtKB-SubCell"/>
</dbReference>
<dbReference type="GO" id="GO:0004474">
    <property type="term" value="F:malate synthase activity"/>
    <property type="evidence" value="ECO:0007669"/>
    <property type="project" value="UniProtKB-EC"/>
</dbReference>
<dbReference type="GO" id="GO:0006097">
    <property type="term" value="P:glyoxylate cycle"/>
    <property type="evidence" value="ECO:0007669"/>
    <property type="project" value="UniProtKB-UniPathway"/>
</dbReference>
<dbReference type="GO" id="GO:0006099">
    <property type="term" value="P:tricarboxylic acid cycle"/>
    <property type="evidence" value="ECO:0007669"/>
    <property type="project" value="UniProtKB-KW"/>
</dbReference>
<dbReference type="CDD" id="cd00727">
    <property type="entry name" value="malate_synt_A"/>
    <property type="match status" value="1"/>
</dbReference>
<dbReference type="FunFam" id="1.20.1220.12:FF:000001">
    <property type="entry name" value="Malate synthase"/>
    <property type="match status" value="1"/>
</dbReference>
<dbReference type="FunFam" id="3.20.20.360:FF:000001">
    <property type="entry name" value="Malate synthase"/>
    <property type="match status" value="1"/>
</dbReference>
<dbReference type="Gene3D" id="3.20.20.360">
    <property type="entry name" value="Malate synthase, domain 3"/>
    <property type="match status" value="1"/>
</dbReference>
<dbReference type="Gene3D" id="1.20.1220.12">
    <property type="entry name" value="Malate synthase, domain III"/>
    <property type="match status" value="1"/>
</dbReference>
<dbReference type="InterPro" id="IPR044856">
    <property type="entry name" value="Malate_synth_C_sf"/>
</dbReference>
<dbReference type="InterPro" id="IPR011076">
    <property type="entry name" value="Malate_synth_sf"/>
</dbReference>
<dbReference type="InterPro" id="IPR006252">
    <property type="entry name" value="Malate_synthA"/>
</dbReference>
<dbReference type="InterPro" id="IPR019830">
    <property type="entry name" value="Malate_synthase_CS"/>
</dbReference>
<dbReference type="InterPro" id="IPR001465">
    <property type="entry name" value="Malate_synthase_TIM"/>
</dbReference>
<dbReference type="InterPro" id="IPR048355">
    <property type="entry name" value="MS_C"/>
</dbReference>
<dbReference type="InterPro" id="IPR048356">
    <property type="entry name" value="MS_N"/>
</dbReference>
<dbReference type="InterPro" id="IPR046363">
    <property type="entry name" value="MS_N_TIM-barrel_dom"/>
</dbReference>
<dbReference type="NCBIfam" id="TIGR01344">
    <property type="entry name" value="malate_syn_A"/>
    <property type="match status" value="1"/>
</dbReference>
<dbReference type="PANTHER" id="PTHR42902">
    <property type="entry name" value="MALATE SYNTHASE"/>
    <property type="match status" value="1"/>
</dbReference>
<dbReference type="PANTHER" id="PTHR42902:SF1">
    <property type="entry name" value="MALATE SYNTHASE 1-RELATED"/>
    <property type="match status" value="1"/>
</dbReference>
<dbReference type="Pfam" id="PF20659">
    <property type="entry name" value="MS_C"/>
    <property type="match status" value="1"/>
</dbReference>
<dbReference type="Pfam" id="PF20656">
    <property type="entry name" value="MS_N"/>
    <property type="match status" value="1"/>
</dbReference>
<dbReference type="Pfam" id="PF01274">
    <property type="entry name" value="MS_TIM-barrel"/>
    <property type="match status" value="1"/>
</dbReference>
<dbReference type="PIRSF" id="PIRSF001363">
    <property type="entry name" value="Malate_synth"/>
    <property type="match status" value="1"/>
</dbReference>
<dbReference type="SUPFAM" id="SSF51645">
    <property type="entry name" value="Malate synthase G"/>
    <property type="match status" value="1"/>
</dbReference>
<dbReference type="PROSITE" id="PS00510">
    <property type="entry name" value="MALATE_SYNTHASE"/>
    <property type="match status" value="1"/>
</dbReference>
<sequence length="567" mass="64263">MRYDTYGDSAPIKKTGAGYDVPEGVDIRGRYDGEFAKILTRDALQFVADLQREFRNRIRYAIECRKEAKSRYNAGALPGFEHPATKYIREGEWTCAPVPPAVADRKVEITGPVERKMIINALNSGAKVFMADFEDALSPSWENLMRGQVNLRDAVNGTISFHDKARNRVYKLNDQIAKLFVRPRGWHLPEAHILIDGEPATGCLVDFGLYFYHNYAAFRRNQGAGYGPFFYLPKMEHSREAKIWNCVFEKAEKMAGIERGSIRATVLIETLPAVFQMNEILYELRDHSVGLNCGRWDYIFSYVKTFQAHPDRPLPDRVQVGMTQHFMKSYSDLLVWTCHRRGVHAMGGMAAQIPIRDDPAANKAALELVRKDKLREVKAGHDGTWAAHPGLIPACMEVFANNMGNTPHQIQAMKREDAANITEEDLIQRPRGVRTLEGLRLNTRVGIQYLAAWLTGTGSVPLYNLMEDAATAEISRVQNWQWLKYGVELDGDGLGVKVTFDLLGRVVEDEMARIEREVGKEKFKKGMYKEACKMFVRQCAAPTLDDFLTLDAYNNIVIHYPKGSSRL</sequence>
<accession>P17815</accession>
<proteinExistence type="evidence at transcript level"/>